<proteinExistence type="evidence at protein level"/>
<feature type="chain" id="PRO_0000085924" description="Myotonin-protein kinase">
    <location>
        <begin position="1"/>
        <end position="629"/>
    </location>
</feature>
<feature type="topological domain" description="Cytoplasmic" evidence="2">
    <location>
        <begin position="1"/>
        <end position="590"/>
    </location>
</feature>
<feature type="transmembrane region" description="Helical; Anchor for type IV membrane protein" evidence="2">
    <location>
        <begin position="591"/>
        <end position="611"/>
    </location>
</feature>
<feature type="topological domain" description="Lumenal" evidence="2">
    <location>
        <begin position="612"/>
        <end position="629"/>
    </location>
</feature>
<feature type="domain" description="Protein kinase" evidence="3">
    <location>
        <begin position="71"/>
        <end position="339"/>
    </location>
</feature>
<feature type="domain" description="AGC-kinase C-terminal" evidence="4">
    <location>
        <begin position="340"/>
        <end position="415"/>
    </location>
</feature>
<feature type="coiled-coil region" evidence="14 16">
    <location>
        <begin position="457"/>
        <end position="536"/>
    </location>
</feature>
<feature type="active site" description="Proton acceptor" evidence="3 5">
    <location>
        <position position="195"/>
    </location>
</feature>
<feature type="binding site" evidence="3">
    <location>
        <begin position="77"/>
        <end position="85"/>
    </location>
    <ligand>
        <name>ATP</name>
        <dbReference type="ChEBI" id="CHEBI:30616"/>
    </ligand>
</feature>
<feature type="binding site">
    <location>
        <position position="100"/>
    </location>
    <ligand>
        <name>ATP</name>
        <dbReference type="ChEBI" id="CHEBI:30616"/>
    </ligand>
</feature>
<feature type="modified residue" description="Phosphoserine; by autocatalysis" evidence="1">
    <location>
        <position position="216"/>
    </location>
</feature>
<feature type="modified residue" description="Phosphoserine; by autocatalysis" evidence="1">
    <location>
        <position position="228"/>
    </location>
</feature>
<feature type="modified residue" description="Phosphothreonine; by autocatalysis" evidence="1">
    <location>
        <position position="234"/>
    </location>
</feature>
<feature type="splice variant" id="VSP_042098" description="In isoform 8." evidence="32">
    <location>
        <begin position="1"/>
        <end position="89"/>
    </location>
</feature>
<feature type="splice variant" id="VSP_042099" description="In isoform 7, isoform 9, isoform 10, isoform 11 and isoform 12." evidence="28 29">
    <original>MSAEVRLRRLQQLVLDPGFLGLEPLLDLLLGVHQELGASELAQDKYVADFLQW</original>
    <variation>MGGHFWPPEPYTVFMWGSPWEADSPRVKLRGREKGRQTEGGAFPLVSSALSGDPRFFSPTTPP</variation>
    <location>
        <begin position="1"/>
        <end position="53"/>
    </location>
</feature>
<feature type="splice variant" id="VSP_042100" description="In isoform 9." evidence="32">
    <location>
        <begin position="226"/>
        <end position="275"/>
    </location>
</feature>
<feature type="splice variant" id="VSP_042101" description="In isoform 2, isoform 4, isoform 6 and isoform 10." evidence="27 30 31">
    <location>
        <begin position="378"/>
        <end position="382"/>
    </location>
</feature>
<feature type="splice variant" id="VSP_042102" description="In isoform 5, isoform 6 and isoform 12." evidence="32">
    <original>AV</original>
    <variation>GP</variation>
    <location>
        <begin position="534"/>
        <end position="535"/>
    </location>
</feature>
<feature type="splice variant" id="VSP_042103" description="In isoform 5, isoform 6 and isoform 12." evidence="32">
    <location>
        <begin position="536"/>
        <end position="629"/>
    </location>
</feature>
<feature type="splice variant" id="VSP_042104" description="In isoform 3 and isoform 4." evidence="31">
    <original>LDGPPAVAVGQCPLVGPGPMHRRHLLLPARVPRPGLSEALSLLLFAVVLSRAAALGCIGLVAHAGQLTAVWRRPGAARAP</original>
    <variation>MAPRPWLWASARWWGQAPCTAATCCSLPGSLGLAYRRRFPCSCSPLFCLVPPPWAALGWWPTPANSPQSGAAQEPPALPEP</variation>
    <location>
        <begin position="550"/>
        <end position="629"/>
    </location>
</feature>
<feature type="splice variant" id="VSP_042105" description="In isoform 11." evidence="32">
    <location>
        <begin position="550"/>
        <end position="579"/>
    </location>
</feature>
<feature type="sequence variant" id="VAR_058334" description="In dbSNP:rs527221." evidence="12 23 24 25">
    <original>L</original>
    <variation>V</variation>
    <location>
        <position position="423"/>
    </location>
</feature>
<feature type="sequence variant" id="VAR_040452" description="In a lung small cell carcinoma sample; somatic mutation." evidence="17">
    <original>L</original>
    <variation>V</variation>
    <location>
        <position position="428"/>
    </location>
</feature>
<feature type="mutagenesis site" description="Loss of kinase activity." evidence="15">
    <original>K</original>
    <variation>A</variation>
    <location>
        <position position="100"/>
    </location>
</feature>
<feature type="sequence conflict" description="In Ref. 5; AAB31800." evidence="32" ref="5">
    <original>A</original>
    <variation>P</variation>
    <location>
        <position position="474"/>
    </location>
</feature>
<feature type="helix" evidence="34">
    <location>
        <begin position="12"/>
        <end position="15"/>
    </location>
</feature>
<feature type="turn" evidence="34">
    <location>
        <begin position="17"/>
        <end position="19"/>
    </location>
</feature>
<feature type="helix" evidence="34">
    <location>
        <begin position="22"/>
        <end position="37"/>
    </location>
</feature>
<feature type="helix" evidence="34">
    <location>
        <begin position="40"/>
        <end position="43"/>
    </location>
</feature>
<feature type="helix" evidence="34">
    <location>
        <begin position="45"/>
        <end position="64"/>
    </location>
</feature>
<feature type="helix" evidence="34">
    <location>
        <begin position="68"/>
        <end position="70"/>
    </location>
</feature>
<feature type="strand" evidence="34">
    <location>
        <begin position="71"/>
        <end position="79"/>
    </location>
</feature>
<feature type="strand" evidence="34">
    <location>
        <begin position="84"/>
        <end position="90"/>
    </location>
</feature>
<feature type="turn" evidence="34">
    <location>
        <begin position="91"/>
        <end position="93"/>
    </location>
</feature>
<feature type="strand" evidence="34">
    <location>
        <begin position="96"/>
        <end position="103"/>
    </location>
</feature>
<feature type="helix" evidence="34">
    <location>
        <begin position="104"/>
        <end position="110"/>
    </location>
</feature>
<feature type="helix" evidence="34">
    <location>
        <begin position="111"/>
        <end position="113"/>
    </location>
</feature>
<feature type="helix" evidence="34">
    <location>
        <begin position="116"/>
        <end position="125"/>
    </location>
</feature>
<feature type="turn" evidence="34">
    <location>
        <begin position="128"/>
        <end position="130"/>
    </location>
</feature>
<feature type="strand" evidence="34">
    <location>
        <begin position="134"/>
        <end position="139"/>
    </location>
</feature>
<feature type="strand" evidence="34">
    <location>
        <begin position="141"/>
        <end position="148"/>
    </location>
</feature>
<feature type="helix" evidence="34">
    <location>
        <begin position="156"/>
        <end position="163"/>
    </location>
</feature>
<feature type="helix" evidence="34">
    <location>
        <begin position="169"/>
        <end position="188"/>
    </location>
</feature>
<feature type="helix" evidence="34">
    <location>
        <begin position="198"/>
        <end position="200"/>
    </location>
</feature>
<feature type="strand" evidence="34">
    <location>
        <begin position="201"/>
        <end position="203"/>
    </location>
</feature>
<feature type="strand" evidence="34">
    <location>
        <begin position="209"/>
        <end position="211"/>
    </location>
</feature>
<feature type="helix" evidence="34">
    <location>
        <begin position="235"/>
        <end position="237"/>
    </location>
</feature>
<feature type="helix" evidence="34">
    <location>
        <begin position="240"/>
        <end position="247"/>
    </location>
</feature>
<feature type="strand" evidence="34">
    <location>
        <begin position="253"/>
        <end position="255"/>
    </location>
</feature>
<feature type="helix" evidence="34">
    <location>
        <begin position="258"/>
        <end position="273"/>
    </location>
</feature>
<feature type="helix" evidence="34">
    <location>
        <begin position="283"/>
        <end position="291"/>
    </location>
</feature>
<feature type="helix" evidence="34">
    <location>
        <begin position="293"/>
        <end position="296"/>
    </location>
</feature>
<feature type="helix" evidence="34">
    <location>
        <begin position="308"/>
        <end position="315"/>
    </location>
</feature>
<feature type="helix" evidence="34">
    <location>
        <begin position="321"/>
        <end position="323"/>
    </location>
</feature>
<feature type="turn" evidence="34">
    <location>
        <begin position="325"/>
        <end position="329"/>
    </location>
</feature>
<feature type="helix" evidence="34">
    <location>
        <begin position="330"/>
        <end position="334"/>
    </location>
</feature>
<feature type="helix" evidence="34">
    <location>
        <begin position="337"/>
        <end position="339"/>
    </location>
</feature>
<feature type="strand" evidence="34">
    <location>
        <begin position="378"/>
        <end position="382"/>
    </location>
</feature>
<feature type="turn" evidence="34">
    <location>
        <begin position="385"/>
        <end position="387"/>
    </location>
</feature>
<feature type="helix" evidence="34">
    <location>
        <begin position="398"/>
        <end position="400"/>
    </location>
</feature>
<feature type="helix" evidence="34">
    <location>
        <begin position="412"/>
        <end position="414"/>
    </location>
</feature>
<feature type="helix" evidence="33">
    <location>
        <begin position="468"/>
        <end position="528"/>
    </location>
</feature>
<reference key="1">
    <citation type="journal article" date="1992" name="Science">
        <title>An unstable triplet repeat in a gene related to myotonic muscular dystrophy.</title>
        <authorList>
            <person name="Fu Y.-H."/>
            <person name="Pizzuti A."/>
            <person name="Fenwick R.G. Jr."/>
            <person name="King J."/>
            <person name="Rajnarayan S."/>
            <person name="Dunne P.W."/>
            <person name="Dubel J."/>
            <person name="Nasser G.A."/>
            <person name="Ashizawa T."/>
            <person name="de Jong P.J."/>
            <person name="Wieringa B."/>
            <person name="Korneluk R."/>
            <person name="Perryman M.B."/>
            <person name="Epstein H.F."/>
            <person name="Caskey C.T."/>
        </authorList>
    </citation>
    <scope>NUCLEOTIDE SEQUENCE [MRNA] (ISOFORM 7)</scope>
    <scope>INVOLVEMENT IN DM1</scope>
</reference>
<reference key="2">
    <citation type="journal article" date="1993" name="Genomics">
        <title>Genomic organization and transcriptional units at the myotonic dystrophy locus.</title>
        <authorList>
            <person name="Shaw D.J."/>
            <person name="McCurrach M."/>
            <person name="Rundle S.A."/>
            <person name="Harley H.G."/>
            <person name="Crow S.R."/>
            <person name="Sohn R."/>
            <person name="Thirion J.-P."/>
            <person name="Hamshere M.G."/>
            <person name="Buckler A.J."/>
            <person name="Harper P.S."/>
            <person name="Housman D.E."/>
            <person name="Brook J.D."/>
        </authorList>
    </citation>
    <scope>NUCLEOTIDE SEQUENCE [GENOMIC DNA / MRNA] (ISOFORM 2)</scope>
    <scope>VARIANT VAL-423</scope>
    <source>
        <tissue>Brain</tissue>
        <tissue>Muscle</tissue>
    </source>
</reference>
<reference key="3">
    <citation type="journal article" date="1993" name="Hum. Mol. Genet.">
        <title>Structure and genomic sequence of the myotonic dystrophy (DM kinase) gene.</title>
        <authorList>
            <person name="Mahadevan M.S."/>
            <person name="Amemiya C."/>
            <person name="Jansen G."/>
            <person name="Sabourin L."/>
            <person name="Baird S."/>
            <person name="Neville C.E."/>
            <person name="Wormskamp N."/>
            <person name="Segers B."/>
            <person name="Batzer M."/>
            <person name="Lamerdin J."/>
            <person name="de Jong P.J."/>
            <person name="Wieringa B."/>
            <person name="Korneluk R.G."/>
        </authorList>
    </citation>
    <scope>NUCLEOTIDE SEQUENCE [GENOMIC DNA] (ISOFORMS 1; 2; 5; 6)</scope>
    <scope>VARIANT VAL-423</scope>
</reference>
<reference key="4">
    <citation type="journal article" date="1993" name="Science">
        <title>Decreased expression of myotonin-protein kinase messenger RNA and protein in adult form of myotonic dystrophy.</title>
        <authorList>
            <person name="Fu Y.-H."/>
            <person name="Friedman D.L."/>
            <person name="Richards S."/>
            <person name="Pearlman J.A."/>
            <person name="Gibbs R.A."/>
            <person name="Pizzuti A."/>
            <person name="Ashizawa T."/>
            <person name="Perryman M.B."/>
            <person name="Scarlato G."/>
            <person name="Fenwick R.G. Jr."/>
            <person name="Caskey C.T."/>
        </authorList>
    </citation>
    <scope>NUCLEOTIDE SEQUENCE [GENOMIC DNA] (ISOFORMS 7; 8; 9; 10; 11 AND 12)</scope>
    <scope>VARIANT VAL-423</scope>
</reference>
<reference key="5">
    <citation type="journal article" date="1994" name="FEBS Lett.">
        <title>Expression of a novel human myotonin protein kinase (MtPK) cDNA clone which encodes a protein with a thymopoietin-like domain in COS cells.</title>
        <authorList>
            <person name="Sasagawa N."/>
            <person name="Sorimachi H."/>
            <person name="Maruyama K."/>
            <person name="Arahata K."/>
            <person name="Ishiura S."/>
            <person name="Suzuki K."/>
        </authorList>
    </citation>
    <scope>NUCLEOTIDE SEQUENCE [MRNA] (ISOFORM 4)</scope>
    <source>
        <tissue>Muscle</tissue>
    </source>
</reference>
<reference key="6">
    <citation type="journal article" date="2011" name="Nucleic Acids Res.">
        <title>Identification of rare DNA variants in mitochondrial disorders with improved array-based sequencing.</title>
        <authorList>
            <person name="Wang W."/>
            <person name="Shen P."/>
            <person name="Thiyagarajan S."/>
            <person name="Lin S."/>
            <person name="Palm C."/>
            <person name="Horvath R."/>
            <person name="Klopstock T."/>
            <person name="Cutler D."/>
            <person name="Pique L."/>
            <person name="Schrijver I."/>
            <person name="Davis R.W."/>
            <person name="Mindrinos M."/>
            <person name="Speed T.P."/>
            <person name="Scharfe C."/>
        </authorList>
    </citation>
    <scope>NUCLEOTIDE SEQUENCE [GENOMIC DNA] (ISOFORM 7)</scope>
</reference>
<reference key="7">
    <citation type="journal article" date="2014" name="Nat. Commun.">
        <title>Protein interaction network of alternatively spliced isoforms from brain links genetic risk factors for autism.</title>
        <authorList>
            <person name="Corominas R."/>
            <person name="Yang X."/>
            <person name="Lin G.N."/>
            <person name="Kang S."/>
            <person name="Shen Y."/>
            <person name="Ghamsari L."/>
            <person name="Broly M."/>
            <person name="Rodriguez M."/>
            <person name="Tam S."/>
            <person name="Wanamaker S.A."/>
            <person name="Fan C."/>
            <person name="Yi S."/>
            <person name="Tasan M."/>
            <person name="Lemmens I."/>
            <person name="Kuang X."/>
            <person name="Zhao N."/>
            <person name="Malhotra D."/>
            <person name="Michaelson J.J."/>
            <person name="Vacic V."/>
            <person name="Calderwood M.A."/>
            <person name="Roth F.P."/>
            <person name="Tavernier J."/>
            <person name="Horvath S."/>
            <person name="Salehi-Ashtiani K."/>
            <person name="Korkin D."/>
            <person name="Sebat J."/>
            <person name="Hill D.E."/>
            <person name="Hao T."/>
            <person name="Vidal M."/>
            <person name="Iakoucheva L.M."/>
        </authorList>
    </citation>
    <scope>NUCLEOTIDE SEQUENCE [MRNA] (ISOFORM 7)</scope>
    <source>
        <tissue>Fetal brain</tissue>
    </source>
</reference>
<reference key="8">
    <citation type="submission" date="2005-07" db="EMBL/GenBank/DDBJ databases">
        <authorList>
            <person name="Mural R.J."/>
            <person name="Istrail S."/>
            <person name="Sutton G.G."/>
            <person name="Florea L."/>
            <person name="Halpern A.L."/>
            <person name="Mobarry C.M."/>
            <person name="Lippert R."/>
            <person name="Walenz B."/>
            <person name="Shatkay H."/>
            <person name="Dew I."/>
            <person name="Miller J.R."/>
            <person name="Flanigan M.J."/>
            <person name="Edwards N.J."/>
            <person name="Bolanos R."/>
            <person name="Fasulo D."/>
            <person name="Halldorsson B.V."/>
            <person name="Hannenhalli S."/>
            <person name="Turner R."/>
            <person name="Yooseph S."/>
            <person name="Lu F."/>
            <person name="Nusskern D.R."/>
            <person name="Shue B.C."/>
            <person name="Zheng X.H."/>
            <person name="Zhong F."/>
            <person name="Delcher A.L."/>
            <person name="Huson D.H."/>
            <person name="Kravitz S.A."/>
            <person name="Mouchard L."/>
            <person name="Reinert K."/>
            <person name="Remington K.A."/>
            <person name="Clark A.G."/>
            <person name="Waterman M.S."/>
            <person name="Eichler E.E."/>
            <person name="Adams M.D."/>
            <person name="Hunkapiller M.W."/>
            <person name="Myers E.W."/>
            <person name="Venter J.C."/>
        </authorList>
    </citation>
    <scope>NUCLEOTIDE SEQUENCE [LARGE SCALE GENOMIC DNA]</scope>
</reference>
<reference key="9">
    <citation type="journal article" date="2004" name="Genome Res.">
        <title>The status, quality, and expansion of the NIH full-length cDNA project: the Mammalian Gene Collection (MGC).</title>
        <authorList>
            <consortium name="The MGC Project Team"/>
        </authorList>
    </citation>
    <scope>NUCLEOTIDE SEQUENCE [LARGE SCALE MRNA] (ISOFORM 1)</scope>
    <source>
        <tissue>Prostate</tissue>
    </source>
</reference>
<reference key="10">
    <citation type="journal article" date="1992" name="Cell">
        <title>Molecular basis of myotonic dystrophy: expansion of a trinucleotide (CTG) repeat at the 3' end of a transcript encoding a protein kinase family member.</title>
        <authorList>
            <person name="Brook J.D."/>
            <person name="McCurrach M."/>
            <person name="Harley H.G."/>
            <person name="Buckler A.J."/>
            <person name="Church D."/>
            <person name="Aburatani H."/>
            <person name="Hunter K."/>
            <person name="Stanton V.P."/>
            <person name="Thirion J.-P."/>
            <person name="Hudson T."/>
            <person name="Sohn R."/>
            <person name="Zemelman B."/>
            <person name="Snell R.G."/>
            <person name="Rundle S.A."/>
            <person name="Crow S."/>
            <person name="Davies J."/>
            <person name="Shelbourne P."/>
            <person name="Buxton J."/>
            <person name="Jones C."/>
            <person name="Juvonen V."/>
            <person name="Johnson K."/>
            <person name="Harper P.S."/>
            <person name="Shaw D.J."/>
            <person name="Housman D.E."/>
        </authorList>
    </citation>
    <scope>NUCLEOTIDE SEQUENCE [MRNA] OF 43-629 (ISOFORM 2)</scope>
    <scope>INVOLVEMENT IN DM1</scope>
    <scope>VARIANT VAL-423</scope>
</reference>
<reference key="11">
    <citation type="journal article" date="1995" name="Biochem. Biophys. Res. Commun.">
        <title>Different expression of the myotonin protein kinase gene in discrete areas of human brain.</title>
        <authorList>
            <person name="Gennarelli M."/>
            <person name="Lucarelli M."/>
            <person name="Zelano G."/>
            <person name="Pizzuti A."/>
            <person name="Novelli G."/>
            <person name="Dallapiccola B."/>
        </authorList>
    </citation>
    <scope>NUCLEOTIDE SEQUENCE [MRNA] OF 550-619 (ISOFORM 1)</scope>
    <scope>TISSUE SPECIFICITY</scope>
    <source>
        <tissue>Brain</tissue>
    </source>
</reference>
<reference key="12">
    <citation type="journal article" date="1992" name="Nat. Genet.">
        <title>Characterization of the myotonic dystrophy region predicts multiple protein isoform-encoding mRNAs.</title>
        <authorList>
            <person name="Jansen G."/>
            <person name="Mahadevan M.S."/>
            <person name="Amemiya C."/>
            <person name="Wormskamp N."/>
            <person name="Segers B."/>
            <person name="Hendriks W."/>
            <person name="O'Hoy K."/>
            <person name="Baird S."/>
            <person name="Sabourin L."/>
            <person name="Lennon G."/>
            <person name="Jap P.L."/>
            <person name="Iles D."/>
            <person name="Coerwinkel M."/>
            <person name="Hofker M."/>
            <person name="Carrano A.V."/>
            <person name="de Jong P.J."/>
            <person name="Korneluk R.G."/>
            <person name="Wieringa B."/>
        </authorList>
    </citation>
    <scope>ALTERNATIVE SPLICING</scope>
    <scope>INVOLVEMENT IN DM1</scope>
    <source>
        <tissue>Brain</tissue>
        <tissue>Heart</tissue>
    </source>
</reference>
<reference key="13">
    <citation type="journal article" date="1998" name="J. Cell Biol.">
        <title>MKBP, a novel member of the small heat shock protein family, binds and activates the myotonic dystrophy protein kinase.</title>
        <authorList>
            <person name="Suzuki A."/>
            <person name="Sugiyama Y."/>
            <person name="Hayashi Y."/>
            <person name="Nyu-i N."/>
            <person name="Yoshida M."/>
            <person name="Nonaka I."/>
            <person name="Ishiura S."/>
            <person name="Arahata K."/>
            <person name="Ohno S."/>
        </authorList>
    </citation>
    <scope>INTERACTION WITH HSPB2</scope>
    <scope>ACTIVITY REGULATION</scope>
    <source>
        <tissue>Muscle</tissue>
    </source>
</reference>
<reference key="14">
    <citation type="journal article" date="2000" name="Biochemistry">
        <title>Myotonic dystrophy protein kinase domains mediate localization, oligomerization, novel catalytic activity, and autoinhibition.</title>
        <authorList>
            <person name="Bush E.W."/>
            <person name="Helmke S.M."/>
            <person name="Birnbaum R.A."/>
            <person name="Perryman M.B."/>
        </authorList>
    </citation>
    <scope>FUNCTION</scope>
    <scope>ACTIVITY REGULATION</scope>
    <scope>HOMODIMERIZATION</scope>
    <scope>SUBCELLULAR LOCATION</scope>
    <scope>PROTEOLYTIC PROCESSING</scope>
</reference>
<reference key="15">
    <citation type="journal article" date="2000" name="FEBS Lett.">
        <title>Rac-1 and Raf-1 kinases, components of distinct signaling pathways, activate myotonic dystrophy protein kinase.</title>
        <authorList>
            <person name="Shimizu M."/>
            <person name="Wang W."/>
            <person name="Walch E.T."/>
            <person name="Dunne P.W."/>
            <person name="Epstein H.F."/>
        </authorList>
    </citation>
    <scope>INTERACTION WITH RAC1</scope>
    <scope>PHOSPHORYLATION BY RAF1</scope>
    <scope>ACTIVITY REGULATION</scope>
</reference>
<reference key="16">
    <citation type="journal article" date="2000" name="Hum. Mol. Genet.">
        <title>Constitutive and regulated modes of splicing produce six major myotonic dystrophy protein kinase (DMPK) isoforms with distinct properties.</title>
        <authorList>
            <person name="Groenen P.J.T.A."/>
            <person name="Wansink D.G."/>
            <person name="Coerwinkel M."/>
            <person name="van den Broek W."/>
            <person name="Jansen G."/>
            <person name="Wieringa B."/>
        </authorList>
    </citation>
    <scope>ALTERNATIVE SPLICING (ISOFORMS 1; 2; 3; 4; 5 AND 6)</scope>
</reference>
<reference key="17">
    <citation type="journal article" date="2000" name="J. Biol. Chem.">
        <title>Phospholemman is a substrate for myotonic dystrophy protein kinase.</title>
        <authorList>
            <person name="Mounsey J.P."/>
            <person name="John J.E. III"/>
            <person name="Helmke S.M."/>
            <person name="Bush E.W."/>
            <person name="Gilbert J."/>
            <person name="Roses A.D."/>
            <person name="Perryman M.B."/>
            <person name="Jones L.R."/>
            <person name="Moorman J.R."/>
        </authorList>
    </citation>
    <scope>FUNCTION IN PHOSPHORYLATION OF FXYD1/PLM</scope>
</reference>
<reference key="18">
    <citation type="journal article" date="2001" name="FEBS Lett.">
        <title>Myotonic dystrophy protein kinase phosphorylates the myosin phosphatase targeting subunit and inhibits myosin phosphatase activity.</title>
        <authorList>
            <person name="Muranyi A."/>
            <person name="Zhang R."/>
            <person name="Liu F."/>
            <person name="Hirano K."/>
            <person name="Ito M."/>
            <person name="Epstein H.F."/>
            <person name="Hartshorne D.J."/>
        </authorList>
    </citation>
    <scope>FUNCTION IN PHOSPHORYLATION OF PPP1R12A</scope>
</reference>
<reference key="19">
    <citation type="journal article" date="2003" name="FEBS Lett.">
        <title>Homodimerization through coiled-coil regions enhances activity of the myotonic dystrophy protein kinase.</title>
        <authorList>
            <person name="Zhang R."/>
            <person name="Epstein H.F."/>
        </authorList>
    </citation>
    <scope>HOMODIMERIZATION</scope>
    <scope>ACTIVITY REGULATION</scope>
</reference>
<reference key="20">
    <citation type="journal article" date="2005" name="J. Biol. Chem.">
        <title>Myotonic dystrophy protein kinase phosphorylates phospholamban and regulates calcium uptake in cardiomyocyte sarcoplasmic reticulum.</title>
        <authorList>
            <person name="Kaliman P."/>
            <person name="Catalucci D."/>
            <person name="Lam J.T."/>
            <person name="Kondo R."/>
            <person name="Gutierrez J.C."/>
            <person name="Reddy S."/>
            <person name="Palacin M."/>
            <person name="Zorzano A."/>
            <person name="Chien K.R."/>
            <person name="Ruiz-Lozano P."/>
        </authorList>
    </citation>
    <scope>FUNCTION IN PHOSPHORYLATION OF PLN</scope>
    <scope>MUTAGENESIS OF LYS-100</scope>
    <scope>INTERACTION WITH PLN</scope>
</reference>
<reference key="21">
    <citation type="journal article" date="2005" name="Mol. Cell. Biol.">
        <title>Divergent mitochondrial and endoplasmic reticulum association of DMPK splice isoforms depends on unique sequence arrangements in tail anchors.</title>
        <authorList>
            <person name="van Herpen R.E."/>
            <person name="Oude Ophuis R.J."/>
            <person name="Wijers M."/>
            <person name="Bennink M.B."/>
            <person name="van de Loo F.A."/>
            <person name="Fransen J."/>
            <person name="Wieringa B."/>
            <person name="Wansink D.G."/>
        </authorList>
    </citation>
    <scope>ALTERNATIVE SPLICING</scope>
    <scope>SUBCELLULAR LOCATION</scope>
</reference>
<reference key="22">
    <citation type="journal article" date="2009" name="Am. J. Med. Genet. A">
        <title>Highly unstable sequence interruptions of the CTG repeat in the myotonic dystrophy gene.</title>
        <authorList>
            <person name="Musova Z."/>
            <person name="Mazanec R."/>
            <person name="Krepelova A."/>
            <person name="Ehler E."/>
            <person name="Vales J."/>
            <person name="Jaklova R."/>
            <person name="Prochazka T."/>
            <person name="Koukal P."/>
            <person name="Marikova T."/>
            <person name="Kraus J."/>
            <person name="Havlovicova M."/>
            <person name="Sedlacek Z."/>
        </authorList>
    </citation>
    <scope>INVOLVEMENT IN DM1</scope>
</reference>
<reference key="23">
    <citation type="journal article" date="2011" name="FEBS Lett.">
        <title>Chelerythrine perturbs lamellar actomyosin filaments by selective inhibition of myotonic dystrophy kinase-related Cdc42-binding kinase.</title>
        <authorList>
            <person name="Tan I."/>
            <person name="Lai J."/>
            <person name="Yong J."/>
            <person name="Li S.F."/>
            <person name="Leung T."/>
        </authorList>
    </citation>
    <scope>FUNCTION IN PHOSPHORYLATION OF PPP1R12A</scope>
</reference>
<reference key="24">
    <citation type="journal article" date="2011" name="J. Biol. Chem.">
        <title>Myotonic dystrophy protein kinase is critical for nuclear envelope integrity.</title>
        <authorList>
            <person name="Harmon E.B."/>
            <person name="Harmon M.L."/>
            <person name="Larsen T.D."/>
            <person name="Yang J."/>
            <person name="Glasford J.W."/>
            <person name="Perryman M.B."/>
        </authorList>
    </citation>
    <scope>FUNCTION IN NUCLEAR ENVELOPE STABILITY</scope>
    <scope>SUBCELLULAR LOCATION</scope>
    <scope>INTERACTION WITH LMNA</scope>
</reference>
<reference key="25">
    <citation type="journal article" date="2004" name="Acta Crystallogr. D">
        <title>Crystallization and preliminary X-ray analysis of the coiled-coil domain of dystrophia myotonica kinase.</title>
        <authorList>
            <person name="Garcia P."/>
            <person name="Marino M."/>
            <person name="Mayans O."/>
        </authorList>
    </citation>
    <scope>X-RAY CRYSTALLOGRAPHY (1.6 ANGSTROMS) OF 460-537</scope>
    <scope>COILED-COIL DOMAIN</scope>
</reference>
<reference key="26">
    <citation type="journal article" date="2006" name="FASEB J.">
        <title>Molecular insights into the self-assembly mechanism of dystrophia myotonica kinase.</title>
        <authorList>
            <person name="Garcia P."/>
            <person name="Ucurum Z."/>
            <person name="Bucher R."/>
            <person name="Svergun D.I."/>
            <person name="Huber T."/>
            <person name="Lustig A."/>
            <person name="Konarev P.V."/>
            <person name="Marino M."/>
            <person name="Mayans O."/>
        </authorList>
    </citation>
    <scope>X-RAY CRYSTALLOGRAPHY (1.6 ANGSTROMS) OF 460-537</scope>
    <scope>SUBUNIT</scope>
    <scope>COILED-COIL DOMAIN</scope>
</reference>
<reference key="27">
    <citation type="journal article" date="2009" name="Protein Sci.">
        <title>Structure of dystrophia myotonica protein kinase.</title>
        <authorList>
            <person name="Elkins J.M."/>
            <person name="Amos A."/>
            <person name="Niesen F.H."/>
            <person name="Pike A.C.W."/>
            <person name="Fedorov O."/>
            <person name="Knapp S."/>
        </authorList>
    </citation>
    <scope>X-RAY CRYSTALLOGRAPHY (2.8 ANGSTROMS) OF 11-430 IN COMPLEX WITH INHIBITOR BIM-8</scope>
    <scope>SUBUNIT</scope>
</reference>
<reference key="28">
    <citation type="journal article" date="2007" name="Nature">
        <title>Patterns of somatic mutation in human cancer genomes.</title>
        <authorList>
            <person name="Greenman C."/>
            <person name="Stephens P."/>
            <person name="Smith R."/>
            <person name="Dalgliesh G.L."/>
            <person name="Hunter C."/>
            <person name="Bignell G."/>
            <person name="Davies H."/>
            <person name="Teague J."/>
            <person name="Butler A."/>
            <person name="Stevens C."/>
            <person name="Edkins S."/>
            <person name="O'Meara S."/>
            <person name="Vastrik I."/>
            <person name="Schmidt E.E."/>
            <person name="Avis T."/>
            <person name="Barthorpe S."/>
            <person name="Bhamra G."/>
            <person name="Buck G."/>
            <person name="Choudhury B."/>
            <person name="Clements J."/>
            <person name="Cole J."/>
            <person name="Dicks E."/>
            <person name="Forbes S."/>
            <person name="Gray K."/>
            <person name="Halliday K."/>
            <person name="Harrison R."/>
            <person name="Hills K."/>
            <person name="Hinton J."/>
            <person name="Jenkinson A."/>
            <person name="Jones D."/>
            <person name="Menzies A."/>
            <person name="Mironenko T."/>
            <person name="Perry J."/>
            <person name="Raine K."/>
            <person name="Richardson D."/>
            <person name="Shepherd R."/>
            <person name="Small A."/>
            <person name="Tofts C."/>
            <person name="Varian J."/>
            <person name="Webb T."/>
            <person name="West S."/>
            <person name="Widaa S."/>
            <person name="Yates A."/>
            <person name="Cahill D.P."/>
            <person name="Louis D.N."/>
            <person name="Goldstraw P."/>
            <person name="Nicholson A.G."/>
            <person name="Brasseur F."/>
            <person name="Looijenga L."/>
            <person name="Weber B.L."/>
            <person name="Chiew Y.-E."/>
            <person name="DeFazio A."/>
            <person name="Greaves M.F."/>
            <person name="Green A.R."/>
            <person name="Campbell P."/>
            <person name="Birney E."/>
            <person name="Easton D.F."/>
            <person name="Chenevix-Trench G."/>
            <person name="Tan M.-H."/>
            <person name="Khoo S.K."/>
            <person name="Teh B.T."/>
            <person name="Yuen S.T."/>
            <person name="Leung S.Y."/>
            <person name="Wooster R."/>
            <person name="Futreal P.A."/>
            <person name="Stratton M.R."/>
        </authorList>
    </citation>
    <scope>VARIANT [LARGE SCALE ANALYSIS] VAL-428</scope>
</reference>
<protein>
    <recommendedName>
        <fullName>Myotonin-protein kinase</fullName>
        <shortName>MT-PK</shortName>
        <ecNumber>2.7.11.1</ecNumber>
    </recommendedName>
    <alternativeName>
        <fullName>DM-kinase</fullName>
        <shortName>DMK</shortName>
    </alternativeName>
    <alternativeName>
        <fullName>DM1 protein kinase</fullName>
    </alternativeName>
    <alternativeName>
        <fullName>DMPK</fullName>
    </alternativeName>
    <alternativeName>
        <fullName>Myotonic dystrophy protein kinase</fullName>
    </alternativeName>
</protein>
<organism>
    <name type="scientific">Homo sapiens</name>
    <name type="common">Human</name>
    <dbReference type="NCBI Taxonomy" id="9606"/>
    <lineage>
        <taxon>Eukaryota</taxon>
        <taxon>Metazoa</taxon>
        <taxon>Chordata</taxon>
        <taxon>Craniata</taxon>
        <taxon>Vertebrata</taxon>
        <taxon>Euteleostomi</taxon>
        <taxon>Mammalia</taxon>
        <taxon>Eutheria</taxon>
        <taxon>Euarchontoglires</taxon>
        <taxon>Primates</taxon>
        <taxon>Haplorrhini</taxon>
        <taxon>Catarrhini</taxon>
        <taxon>Hominidae</taxon>
        <taxon>Homo</taxon>
    </lineage>
</organism>
<name>DMPK_HUMAN</name>
<comment type="function">
    <text evidence="6 8 9 15 20 21">Non-receptor serine/threonine protein kinase which is necessary for the maintenance of skeletal muscle structure and function. May play a role in myocyte differentiation and survival by regulating the integrity of the nuclear envelope and the expression of muscle-specific genes. May also phosphorylate PPP1R12A and inhibit the myosin phosphatase activity to regulate myosin phosphorylation. Also critical to the modulation of cardiac contractility and to the maintenance of proper cardiac conduction activity probably through the regulation of cellular calcium homeostasis. Phosphorylates PLN, a regulator of calcium pumps and may regulate sarcoplasmic reticulum calcium uptake in myocytes. May also phosphorylate FXYD1/PLM which is able to induce chloride currents. May also play a role in synaptic plasticity.</text>
</comment>
<comment type="catalytic activity">
    <reaction>
        <text>L-seryl-[protein] + ATP = O-phospho-L-seryl-[protein] + ADP + H(+)</text>
        <dbReference type="Rhea" id="RHEA:17989"/>
        <dbReference type="Rhea" id="RHEA-COMP:9863"/>
        <dbReference type="Rhea" id="RHEA-COMP:11604"/>
        <dbReference type="ChEBI" id="CHEBI:15378"/>
        <dbReference type="ChEBI" id="CHEBI:29999"/>
        <dbReference type="ChEBI" id="CHEBI:30616"/>
        <dbReference type="ChEBI" id="CHEBI:83421"/>
        <dbReference type="ChEBI" id="CHEBI:456216"/>
        <dbReference type="EC" id="2.7.11.1"/>
    </reaction>
</comment>
<comment type="catalytic activity">
    <reaction>
        <text>L-threonyl-[protein] + ATP = O-phospho-L-threonyl-[protein] + ADP + H(+)</text>
        <dbReference type="Rhea" id="RHEA:46608"/>
        <dbReference type="Rhea" id="RHEA-COMP:11060"/>
        <dbReference type="Rhea" id="RHEA-COMP:11605"/>
        <dbReference type="ChEBI" id="CHEBI:15378"/>
        <dbReference type="ChEBI" id="CHEBI:30013"/>
        <dbReference type="ChEBI" id="CHEBI:30616"/>
        <dbReference type="ChEBI" id="CHEBI:61977"/>
        <dbReference type="ChEBI" id="CHEBI:456216"/>
        <dbReference type="EC" id="2.7.11.1"/>
    </reaction>
</comment>
<comment type="cofactor">
    <cofactor>
        <name>Mg(2+)</name>
        <dbReference type="ChEBI" id="CHEBI:18420"/>
    </cofactor>
</comment>
<comment type="activity regulation">
    <text evidence="7 8 10 26">Coiled-coil-mediated oligomerization enhances the catalytic activity. Proteolytic processing of the C-terminus may release the protein from membranes and constitute a mean to regulate the enzyme. May be regulated by HSPB2, RAC1, RAF1 and G-protein second messengers.</text>
</comment>
<comment type="subunit">
    <text evidence="7 15 16 18 21 26">Homodimer; homodimerization stimulates the kinase activity. Interacts with HSPB2; may enhance DMPK kinase activity. Interacts with PLN; phosphorylates PLN. May interact with RAC1; may regulate DMPK kinase activity. Interacts with LMNA; may regulate nuclear envelope stability.</text>
</comment>
<comment type="interaction">
    <interactant intactId="EBI-692774">
        <id>Q09013</id>
    </interactant>
    <interactant intactId="EBI-930964">
        <id>P54253</id>
        <label>ATXN1</label>
    </interactant>
    <organismsDiffer>false</organismsDiffer>
    <experiments>5</experiments>
</comment>
<comment type="interaction">
    <interactant intactId="EBI-692774">
        <id>Q09013</id>
    </interactant>
    <interactant intactId="EBI-692836">
        <id>P26678</id>
        <label>PLN</label>
    </interactant>
    <organismsDiffer>false</organismsDiffer>
    <experiments>4</experiments>
</comment>
<comment type="subcellular location">
    <subcellularLocation>
        <location evidence="1">Endoplasmic reticulum membrane</location>
        <topology evidence="1">Single-pass type IV membrane protein</topology>
        <orientation evidence="1">Cytoplasmic side</orientation>
    </subcellularLocation>
    <subcellularLocation>
        <location evidence="32">Nucleus outer membrane</location>
        <topology evidence="32">Single-pass type IV membrane protein</topology>
        <orientation evidence="32">Cytoplasmic side</orientation>
    </subcellularLocation>
    <subcellularLocation>
        <location evidence="32">Mitochondrion outer membrane</location>
        <topology evidence="32">Single-pass type IV membrane protein</topology>
    </subcellularLocation>
    <subcellularLocation>
        <location evidence="1">Sarcoplasmic reticulum membrane</location>
    </subcellularLocation>
    <subcellularLocation>
        <location evidence="1">Cell membrane</location>
    </subcellularLocation>
    <subcellularLocation>
        <location evidence="1">Cytoplasm</location>
        <location evidence="1">Cytosol</location>
    </subcellularLocation>
    <text evidence="1">Localizes to sarcoplasmic reticulum membranes of cardiomyocytes.</text>
</comment>
<comment type="subcellular location">
    <molecule>Isoform 1</molecule>
    <subcellularLocation>
        <location>Mitochondrion membrane</location>
    </subcellularLocation>
</comment>
<comment type="subcellular location">
    <molecule>Isoform 3</molecule>
    <subcellularLocation>
        <location>Mitochondrion membrane</location>
    </subcellularLocation>
</comment>
<comment type="alternative products">
    <event type="alternative splicing"/>
    <isoform>
        <id>Q09013-9</id>
        <name>1</name>
        <name>DMPK A</name>
        <sequence type="displayed"/>
    </isoform>
    <isoform>
        <id>Q09013-11</id>
        <name>2</name>
        <name>DMPK B</name>
        <sequence type="described" ref="VSP_042101"/>
    </isoform>
    <isoform>
        <id>Q09013-16</id>
        <name>3</name>
        <name>DMPK C</name>
        <sequence type="described" ref="VSP_042104"/>
    </isoform>
    <isoform>
        <id>Q09013-15</id>
        <name>4</name>
        <name>DMPK D</name>
        <sequence type="described" ref="VSP_042101 VSP_042104"/>
    </isoform>
    <isoform>
        <id>Q09013-10</id>
        <name>5</name>
        <name>DMPK E</name>
        <sequence type="described" ref="VSP_042102 VSP_042103"/>
    </isoform>
    <isoform>
        <id>Q09013-12</id>
        <name>6</name>
        <name>DMPK F</name>
        <sequence type="described" ref="VSP_042101 VSP_042102 VSP_042103"/>
    </isoform>
    <isoform>
        <id>Q09013-1</id>
        <name>7</name>
        <sequence type="described" ref="VSP_042099"/>
    </isoform>
    <isoform>
        <id>Q09013-2</id>
        <name>8</name>
        <sequence type="described" ref="VSP_042098"/>
    </isoform>
    <isoform>
        <id>Q09013-5</id>
        <name>9</name>
        <sequence type="described" ref="VSP_042099 VSP_042100"/>
    </isoform>
    <isoform>
        <id>Q09013-6</id>
        <name>10</name>
        <sequence type="described" ref="VSP_042099 VSP_042101"/>
    </isoform>
    <isoform>
        <id>Q09013-7</id>
        <name>11</name>
        <sequence type="described" ref="VSP_042099 VSP_042105"/>
    </isoform>
    <isoform>
        <id>Q09013-8</id>
        <name>12</name>
        <sequence type="described" ref="VSP_042099 VSP_042102 VSP_042103"/>
    </isoform>
</comment>
<comment type="tissue specificity">
    <text evidence="22">Most isoforms are expressed in many tissues including heart, skeletal muscle, liver and brain, except for isoform 2 which is only found in the heart and skeletal muscle, and isoform 14 which is only found in the brain, with high levels in the striatum, cerebellar cortex and pons.</text>
</comment>
<comment type="domain">
    <text>The coiled coil domain is required for homodimerization and regulates the enzymatic activity.</text>
</comment>
<comment type="PTM">
    <text evidence="7">Phosphorylated. Autophosphorylates. Phosphorylation by RAF1 may result in activation of DMPK.</text>
</comment>
<comment type="PTM">
    <text evidence="8">Proteolytic processing of the C-terminus may remove the transmembrane domain and release the kinase from membranes stimulating its activity.</text>
</comment>
<comment type="disease" evidence="11 12 13 19">
    <disease id="DI-02023">
        <name>Dystrophia myotonica 1</name>
        <acronym>DM1</acronym>
        <description>A muscular disorder characterized by myotonia, muscle wasting in the distal extremities, cataract, hypogonadism, defective endocrine functions, male baldness and cardiac arrhythmias.</description>
        <dbReference type="MIM" id="160900"/>
    </disease>
    <text evidence="12 19">The disease is caused by variants affecting the gene represented in this entry. The causative mutation is a CTG expansion in the 3'-UTR of the DMPK gene. A length exceeding 50 CTG repeats is pathogenic, while normal individuals have 5 to 37 repeats. Intermediate alleles with 35-49 triplets are not disease-causing but show instability in intergenerational transmissions. Disease severity varies with the number of repeats: mildly affected persons have 50 to 150 repeats, patients with classic DM have 100 to 1,000 repeats, and those with congenital onset can have more than 2,000 repeats.</text>
</comment>
<comment type="similarity">
    <text evidence="32">Belongs to the protein kinase superfamily. AGC Ser/Thr protein kinase family. DMPK subfamily.</text>
</comment>
<comment type="sequence caution" evidence="32">
    <conflict type="frameshift">
        <sequence resource="EMBL-CDS" id="AAA64884"/>
    </conflict>
</comment>
<comment type="sequence caution" evidence="32">
    <conflict type="miscellaneous discrepancy">
        <sequence resource="EMBL-CDS" id="AAA87583"/>
    </conflict>
    <text>Probable cloning artifact.</text>
</comment>
<dbReference type="EC" id="2.7.11.1"/>
<dbReference type="EMBL" id="M87312">
    <property type="status" value="NOT_ANNOTATED_CDS"/>
    <property type="molecule type" value="mRNA"/>
</dbReference>
<dbReference type="EMBL" id="L19268">
    <property type="protein sequence ID" value="AAA36206.1"/>
    <property type="molecule type" value="mRNA"/>
</dbReference>
<dbReference type="EMBL" id="L19266">
    <property type="protein sequence ID" value="AAA36205.1"/>
    <property type="molecule type" value="Genomic_DNA"/>
</dbReference>
<dbReference type="EMBL" id="L08835">
    <property type="protein sequence ID" value="AAC14449.1"/>
    <property type="molecule type" value="Genomic_DNA"/>
</dbReference>
<dbReference type="EMBL" id="L08835">
    <property type="protein sequence ID" value="AAC14451.1"/>
    <property type="molecule type" value="Genomic_DNA"/>
</dbReference>
<dbReference type="EMBL" id="L08835">
    <property type="protein sequence ID" value="AAC14448.1"/>
    <property type="molecule type" value="Genomic_DNA"/>
</dbReference>
<dbReference type="EMBL" id="L08835">
    <property type="protein sequence ID" value="AAC14450.1"/>
    <property type="molecule type" value="Genomic_DNA"/>
</dbReference>
<dbReference type="EMBL" id="L00727">
    <property type="protein sequence ID" value="AAA75235.1"/>
    <property type="molecule type" value="Genomic_DNA"/>
</dbReference>
<dbReference type="EMBL" id="L00727">
    <property type="protein sequence ID" value="AAA75236.1"/>
    <property type="molecule type" value="Genomic_DNA"/>
</dbReference>
<dbReference type="EMBL" id="L00727">
    <property type="protein sequence ID" value="AAA75237.1"/>
    <property type="molecule type" value="Genomic_DNA"/>
</dbReference>
<dbReference type="EMBL" id="L00727">
    <property type="protein sequence ID" value="AAA75238.1"/>
    <property type="molecule type" value="Genomic_DNA"/>
</dbReference>
<dbReference type="EMBL" id="L00727">
    <property type="protein sequence ID" value="AAA75239.1"/>
    <property type="molecule type" value="Genomic_DNA"/>
</dbReference>
<dbReference type="EMBL" id="L00727">
    <property type="protein sequence ID" value="AAA75240.1"/>
    <property type="molecule type" value="Genomic_DNA"/>
</dbReference>
<dbReference type="EMBL" id="S72883">
    <property type="protein sequence ID" value="AAB31800.1"/>
    <property type="molecule type" value="mRNA"/>
</dbReference>
<dbReference type="EMBL" id="HQ205626">
    <property type="protein sequence ID" value="ADP91337.1"/>
    <property type="molecule type" value="Genomic_DNA"/>
</dbReference>
<dbReference type="EMBL" id="HQ205627">
    <property type="protein sequence ID" value="ADP91341.1"/>
    <property type="molecule type" value="Genomic_DNA"/>
</dbReference>
<dbReference type="EMBL" id="HQ205628">
    <property type="protein sequence ID" value="ADP91345.1"/>
    <property type="molecule type" value="Genomic_DNA"/>
</dbReference>
<dbReference type="EMBL" id="HQ205629">
    <property type="protein sequence ID" value="ADP91349.1"/>
    <property type="molecule type" value="Genomic_DNA"/>
</dbReference>
<dbReference type="EMBL" id="HQ205630">
    <property type="protein sequence ID" value="ADP91353.1"/>
    <property type="molecule type" value="Genomic_DNA"/>
</dbReference>
<dbReference type="EMBL" id="HQ205631">
    <property type="protein sequence ID" value="ADP91357.1"/>
    <property type="molecule type" value="Genomic_DNA"/>
</dbReference>
<dbReference type="EMBL" id="HQ205632">
    <property type="protein sequence ID" value="ADP91361.1"/>
    <property type="molecule type" value="Genomic_DNA"/>
</dbReference>
<dbReference type="EMBL" id="HQ205633">
    <property type="protein sequence ID" value="ADP91365.1"/>
    <property type="molecule type" value="Genomic_DNA"/>
</dbReference>
<dbReference type="EMBL" id="HQ205634">
    <property type="protein sequence ID" value="ADP91369.1"/>
    <property type="molecule type" value="Genomic_DNA"/>
</dbReference>
<dbReference type="EMBL" id="HQ205635">
    <property type="protein sequence ID" value="ADP91373.1"/>
    <property type="molecule type" value="Genomic_DNA"/>
</dbReference>
<dbReference type="EMBL" id="HQ205636">
    <property type="protein sequence ID" value="ADP91377.1"/>
    <property type="molecule type" value="Genomic_DNA"/>
</dbReference>
<dbReference type="EMBL" id="HQ205637">
    <property type="protein sequence ID" value="ADP91381.1"/>
    <property type="molecule type" value="Genomic_DNA"/>
</dbReference>
<dbReference type="EMBL" id="HQ205638">
    <property type="protein sequence ID" value="ADP91385.1"/>
    <property type="molecule type" value="Genomic_DNA"/>
</dbReference>
<dbReference type="EMBL" id="HQ205639">
    <property type="protein sequence ID" value="ADP91389.1"/>
    <property type="molecule type" value="Genomic_DNA"/>
</dbReference>
<dbReference type="EMBL" id="HQ205640">
    <property type="protein sequence ID" value="ADP91393.1"/>
    <property type="molecule type" value="Genomic_DNA"/>
</dbReference>
<dbReference type="EMBL" id="HQ205641">
    <property type="protein sequence ID" value="ADP91397.1"/>
    <property type="molecule type" value="Genomic_DNA"/>
</dbReference>
<dbReference type="EMBL" id="HQ205642">
    <property type="protein sequence ID" value="ADP91401.1"/>
    <property type="molecule type" value="Genomic_DNA"/>
</dbReference>
<dbReference type="EMBL" id="HQ205643">
    <property type="protein sequence ID" value="ADP91405.1"/>
    <property type="molecule type" value="Genomic_DNA"/>
</dbReference>
<dbReference type="EMBL" id="HQ205644">
    <property type="protein sequence ID" value="ADP91409.1"/>
    <property type="molecule type" value="Genomic_DNA"/>
</dbReference>
<dbReference type="EMBL" id="HQ205645">
    <property type="protein sequence ID" value="ADP91413.1"/>
    <property type="molecule type" value="Genomic_DNA"/>
</dbReference>
<dbReference type="EMBL" id="HQ205646">
    <property type="protein sequence ID" value="ADP91417.1"/>
    <property type="molecule type" value="Genomic_DNA"/>
</dbReference>
<dbReference type="EMBL" id="HQ205647">
    <property type="protein sequence ID" value="ADP91421.1"/>
    <property type="molecule type" value="Genomic_DNA"/>
</dbReference>
<dbReference type="EMBL" id="HQ205648">
    <property type="protein sequence ID" value="ADP91425.1"/>
    <property type="molecule type" value="Genomic_DNA"/>
</dbReference>
<dbReference type="EMBL" id="HQ205649">
    <property type="protein sequence ID" value="ADP91429.1"/>
    <property type="molecule type" value="Genomic_DNA"/>
</dbReference>
<dbReference type="EMBL" id="HQ205650">
    <property type="protein sequence ID" value="ADP91433.1"/>
    <property type="molecule type" value="Genomic_DNA"/>
</dbReference>
<dbReference type="EMBL" id="HQ205651">
    <property type="protein sequence ID" value="ADP91437.1"/>
    <property type="molecule type" value="Genomic_DNA"/>
</dbReference>
<dbReference type="EMBL" id="HQ205652">
    <property type="protein sequence ID" value="ADP91441.1"/>
    <property type="molecule type" value="Genomic_DNA"/>
</dbReference>
<dbReference type="EMBL" id="HQ205653">
    <property type="protein sequence ID" value="ADP91445.1"/>
    <property type="molecule type" value="Genomic_DNA"/>
</dbReference>
<dbReference type="EMBL" id="HQ205654">
    <property type="protein sequence ID" value="ADP91449.1"/>
    <property type="molecule type" value="Genomic_DNA"/>
</dbReference>
<dbReference type="EMBL" id="HQ205655">
    <property type="protein sequence ID" value="ADP91453.1"/>
    <property type="molecule type" value="Genomic_DNA"/>
</dbReference>
<dbReference type="EMBL" id="HQ205656">
    <property type="protein sequence ID" value="ADP91457.1"/>
    <property type="molecule type" value="Genomic_DNA"/>
</dbReference>
<dbReference type="EMBL" id="HQ205657">
    <property type="protein sequence ID" value="ADP91461.1"/>
    <property type="molecule type" value="Genomic_DNA"/>
</dbReference>
<dbReference type="EMBL" id="HQ205658">
    <property type="protein sequence ID" value="ADP91465.1"/>
    <property type="molecule type" value="Genomic_DNA"/>
</dbReference>
<dbReference type="EMBL" id="HQ205659">
    <property type="protein sequence ID" value="ADP91469.1"/>
    <property type="molecule type" value="Genomic_DNA"/>
</dbReference>
<dbReference type="EMBL" id="HQ205660">
    <property type="protein sequence ID" value="ADP91473.1"/>
    <property type="molecule type" value="Genomic_DNA"/>
</dbReference>
<dbReference type="EMBL" id="HQ205661">
    <property type="protein sequence ID" value="ADP91477.1"/>
    <property type="molecule type" value="Genomic_DNA"/>
</dbReference>
<dbReference type="EMBL" id="HQ205662">
    <property type="protein sequence ID" value="ADP91481.1"/>
    <property type="molecule type" value="Genomic_DNA"/>
</dbReference>
<dbReference type="EMBL" id="HQ205663">
    <property type="protein sequence ID" value="ADP91485.1"/>
    <property type="molecule type" value="Genomic_DNA"/>
</dbReference>
<dbReference type="EMBL" id="HQ205664">
    <property type="protein sequence ID" value="ADP91489.1"/>
    <property type="molecule type" value="Genomic_DNA"/>
</dbReference>
<dbReference type="EMBL" id="HQ205665">
    <property type="protein sequence ID" value="ADP91493.1"/>
    <property type="molecule type" value="Genomic_DNA"/>
</dbReference>
<dbReference type="EMBL" id="KJ534827">
    <property type="protein sequence ID" value="AHW56467.1"/>
    <property type="molecule type" value="mRNA"/>
</dbReference>
<dbReference type="EMBL" id="CH471126">
    <property type="protein sequence ID" value="EAW57380.1"/>
    <property type="molecule type" value="Genomic_DNA"/>
</dbReference>
<dbReference type="EMBL" id="CH471126">
    <property type="protein sequence ID" value="EAW57382.1"/>
    <property type="molecule type" value="Genomic_DNA"/>
</dbReference>
<dbReference type="EMBL" id="BC062553">
    <property type="protein sequence ID" value="AAH62553.1"/>
    <property type="molecule type" value="mRNA"/>
</dbReference>
<dbReference type="EMBL" id="M94203">
    <property type="protein sequence ID" value="AAA64884.1"/>
    <property type="status" value="ALT_FRAME"/>
    <property type="molecule type" value="mRNA"/>
</dbReference>
<dbReference type="EMBL" id="U46546">
    <property type="protein sequence ID" value="AAA87583.1"/>
    <property type="status" value="ALT_SEQ"/>
    <property type="molecule type" value="mRNA"/>
</dbReference>
<dbReference type="CCDS" id="CCDS12674.1">
    <molecule id="Q09013-9"/>
</dbReference>
<dbReference type="CCDS" id="CCDS46117.1">
    <molecule id="Q09013-15"/>
</dbReference>
<dbReference type="CCDS" id="CCDS46118.1">
    <molecule id="Q09013-11"/>
</dbReference>
<dbReference type="CCDS" id="CCDS74400.1">
    <molecule id="Q09013-12"/>
</dbReference>
<dbReference type="PIR" id="B49364">
    <property type="entry name" value="B49364"/>
</dbReference>
<dbReference type="RefSeq" id="NP_001075029.1">
    <molecule id="Q09013-11"/>
    <property type="nucleotide sequence ID" value="NM_001081560.3"/>
</dbReference>
<dbReference type="RefSeq" id="NP_001075031.1">
    <molecule id="Q09013-15"/>
    <property type="nucleotide sequence ID" value="NM_001081562.3"/>
</dbReference>
<dbReference type="RefSeq" id="NP_001075032.1">
    <molecule id="Q09013-1"/>
    <property type="nucleotide sequence ID" value="NM_001081563.3"/>
</dbReference>
<dbReference type="RefSeq" id="NP_001275694.1">
    <property type="nucleotide sequence ID" value="NM_001288765.1"/>
</dbReference>
<dbReference type="RefSeq" id="NP_001275695.1">
    <molecule id="Q09013-12"/>
    <property type="nucleotide sequence ID" value="NM_001288766.2"/>
</dbReference>
<dbReference type="RefSeq" id="NP_001411088.1">
    <molecule id="Q09013-9"/>
    <property type="nucleotide sequence ID" value="NM_001424159.1"/>
</dbReference>
<dbReference type="RefSeq" id="NP_001411089.1">
    <molecule id="Q09013-10"/>
    <property type="nucleotide sequence ID" value="NM_001424160.1"/>
</dbReference>
<dbReference type="RefSeq" id="NP_001411090.1">
    <molecule id="Q09013-12"/>
    <property type="nucleotide sequence ID" value="NM_001424161.1"/>
</dbReference>
<dbReference type="RefSeq" id="NP_001411091.1">
    <molecule id="Q09013-16"/>
    <property type="nucleotide sequence ID" value="NM_001424162.1"/>
</dbReference>
<dbReference type="RefSeq" id="NP_001411093.1">
    <molecule id="Q09013-10"/>
    <property type="nucleotide sequence ID" value="NM_001424164.1"/>
</dbReference>
<dbReference type="RefSeq" id="NP_004400.4">
    <molecule id="Q09013-9"/>
    <property type="nucleotide sequence ID" value="NM_004409.4"/>
</dbReference>
<dbReference type="PDB" id="1WT6">
    <property type="method" value="X-ray"/>
    <property type="resolution" value="1.60 A"/>
    <property type="chains" value="A/B/D=460-537"/>
</dbReference>
<dbReference type="PDB" id="2VD5">
    <property type="method" value="X-ray"/>
    <property type="resolution" value="2.80 A"/>
    <property type="chains" value="A/B=11-420"/>
</dbReference>
<dbReference type="PDBsum" id="1WT6"/>
<dbReference type="PDBsum" id="2VD5"/>
<dbReference type="SASBDB" id="Q09013"/>
<dbReference type="SMR" id="Q09013"/>
<dbReference type="BioGRID" id="108100">
    <property type="interactions" value="33"/>
</dbReference>
<dbReference type="FunCoup" id="Q09013">
    <property type="interactions" value="157"/>
</dbReference>
<dbReference type="IntAct" id="Q09013">
    <property type="interactions" value="17"/>
</dbReference>
<dbReference type="MINT" id="Q09013"/>
<dbReference type="STRING" id="9606.ENSP00000345997"/>
<dbReference type="BindingDB" id="Q09013"/>
<dbReference type="ChEMBL" id="CHEMBL5320"/>
<dbReference type="DrugBank" id="DB01946">
    <property type="generic name" value="Bisindolylmaleimide VIII"/>
</dbReference>
<dbReference type="DrugCentral" id="Q09013"/>
<dbReference type="GuidetoPHARMACOLOGY" id="1505"/>
<dbReference type="GlyGen" id="Q09013">
    <property type="glycosylation" value="1 site"/>
</dbReference>
<dbReference type="iPTMnet" id="Q09013"/>
<dbReference type="PhosphoSitePlus" id="Q09013"/>
<dbReference type="BioMuta" id="DMPK"/>
<dbReference type="DMDM" id="363548519"/>
<dbReference type="REPRODUCTION-2DPAGE" id="Q09013"/>
<dbReference type="jPOST" id="Q09013"/>
<dbReference type="MassIVE" id="Q09013"/>
<dbReference type="PaxDb" id="9606-ENSP00000345997"/>
<dbReference type="PeptideAtlas" id="Q09013"/>
<dbReference type="ProteomicsDB" id="58699">
    <molecule id="Q09013-9"/>
</dbReference>
<dbReference type="ProteomicsDB" id="58700">
    <molecule id="Q09013-1"/>
</dbReference>
<dbReference type="ProteomicsDB" id="58701">
    <molecule id="Q09013-10"/>
</dbReference>
<dbReference type="ProteomicsDB" id="58702">
    <molecule id="Q09013-11"/>
</dbReference>
<dbReference type="ProteomicsDB" id="58703">
    <molecule id="Q09013-12"/>
</dbReference>
<dbReference type="ProteomicsDB" id="58704">
    <molecule id="Q09013-15"/>
</dbReference>
<dbReference type="ProteomicsDB" id="58705">
    <molecule id="Q09013-16"/>
</dbReference>
<dbReference type="ProteomicsDB" id="58706">
    <molecule id="Q09013-2"/>
</dbReference>
<dbReference type="ProteomicsDB" id="58707">
    <molecule id="Q09013-5"/>
</dbReference>
<dbReference type="ProteomicsDB" id="58708">
    <molecule id="Q09013-6"/>
</dbReference>
<dbReference type="ProteomicsDB" id="58709">
    <molecule id="Q09013-7"/>
</dbReference>
<dbReference type="ProteomicsDB" id="58710">
    <molecule id="Q09013-8"/>
</dbReference>
<dbReference type="Pumba" id="Q09013"/>
<dbReference type="TopDownProteomics" id="Q09013-11">
    <molecule id="Q09013-11"/>
</dbReference>
<dbReference type="Antibodypedia" id="2044">
    <property type="antibodies" value="297 antibodies from 30 providers"/>
</dbReference>
<dbReference type="DNASU" id="1760"/>
<dbReference type="Ensembl" id="ENST00000291270.9">
    <molecule id="Q09013-9"/>
    <property type="protein sequence ID" value="ENSP00000291270.4"/>
    <property type="gene ID" value="ENSG00000104936.20"/>
</dbReference>
<dbReference type="Ensembl" id="ENST00000343373.10">
    <molecule id="Q09013-16"/>
    <property type="protein sequence ID" value="ENSP00000345997.4"/>
    <property type="gene ID" value="ENSG00000104936.20"/>
</dbReference>
<dbReference type="Ensembl" id="ENST00000354227.9">
    <molecule id="Q09013-12"/>
    <property type="protein sequence ID" value="ENSP00000346168.5"/>
    <property type="gene ID" value="ENSG00000104936.20"/>
</dbReference>
<dbReference type="Ensembl" id="ENST00000447742.6">
    <molecule id="Q09013-11"/>
    <property type="protein sequence ID" value="ENSP00000413417.1"/>
    <property type="gene ID" value="ENSG00000104936.20"/>
</dbReference>
<dbReference type="Ensembl" id="ENST00000458663.6">
    <molecule id="Q09013-15"/>
    <property type="protein sequence ID" value="ENSP00000401753.1"/>
    <property type="gene ID" value="ENSG00000104936.20"/>
</dbReference>
<dbReference type="Ensembl" id="ENST00000683086.1">
    <molecule id="Q09013-10"/>
    <property type="protein sequence ID" value="ENSP00000508381.1"/>
    <property type="gene ID" value="ENSG00000104936.20"/>
</dbReference>
<dbReference type="GeneID" id="1760"/>
<dbReference type="KEGG" id="hsa:1760"/>
<dbReference type="MANE-Select" id="ENST00000291270.9">
    <property type="protein sequence ID" value="ENSP00000291270.4"/>
    <property type="RefSeq nucleotide sequence ID" value="NM_004409.5"/>
    <property type="RefSeq protein sequence ID" value="NP_004400.4"/>
</dbReference>
<dbReference type="UCSC" id="uc002pdd.3">
    <molecule id="Q09013-9"/>
    <property type="organism name" value="human"/>
</dbReference>
<dbReference type="AGR" id="HGNC:2933"/>
<dbReference type="CTD" id="1760"/>
<dbReference type="DisGeNET" id="1760"/>
<dbReference type="GeneCards" id="DMPK"/>
<dbReference type="GeneReviews" id="DMPK"/>
<dbReference type="HGNC" id="HGNC:2933">
    <property type="gene designation" value="DMPK"/>
</dbReference>
<dbReference type="HPA" id="ENSG00000104936">
    <property type="expression patterns" value="Low tissue specificity"/>
</dbReference>
<dbReference type="MalaCards" id="DMPK"/>
<dbReference type="MIM" id="160900">
    <property type="type" value="phenotype"/>
</dbReference>
<dbReference type="MIM" id="605377">
    <property type="type" value="gene"/>
</dbReference>
<dbReference type="neXtProt" id="NX_Q09013"/>
<dbReference type="OpenTargets" id="ENSG00000104936"/>
<dbReference type="Orphanet" id="589830">
    <property type="disease" value="Adult-onset Steinert myotonic dystrophy"/>
</dbReference>
<dbReference type="Orphanet" id="589824">
    <property type="disease" value="Childhood-onset Steinert myotonic dystrophy"/>
</dbReference>
<dbReference type="Orphanet" id="589821">
    <property type="disease" value="Congenital-onset Steinert myotonic dystrophy"/>
</dbReference>
<dbReference type="Orphanet" id="589827">
    <property type="disease" value="Juvenile-onset Steinert myotonic dystrophy"/>
</dbReference>
<dbReference type="Orphanet" id="589833">
    <property type="disease" value="Late-onset Steinert myotonic dystrophy"/>
</dbReference>
<dbReference type="PharmGKB" id="PA27380"/>
<dbReference type="VEuPathDB" id="HostDB:ENSG00000104936"/>
<dbReference type="eggNOG" id="KOG0612">
    <property type="taxonomic scope" value="Eukaryota"/>
</dbReference>
<dbReference type="GeneTree" id="ENSGT00940000162019"/>
<dbReference type="HOGENOM" id="CLU_000288_140_4_1"/>
<dbReference type="InParanoid" id="Q09013"/>
<dbReference type="OMA" id="VCQYPLV"/>
<dbReference type="OrthoDB" id="2156623at2759"/>
<dbReference type="PAN-GO" id="Q09013">
    <property type="GO annotations" value="6 GO annotations based on evolutionary models"/>
</dbReference>
<dbReference type="TreeFam" id="TF105337"/>
<dbReference type="BRENDA" id="2.7.11.1">
    <property type="organism ID" value="2681"/>
</dbReference>
<dbReference type="PathwayCommons" id="Q09013"/>
<dbReference type="Reactome" id="R-HSA-5578775">
    <property type="pathway name" value="Ion homeostasis"/>
</dbReference>
<dbReference type="SignaLink" id="Q09013"/>
<dbReference type="SIGNOR" id="Q09013"/>
<dbReference type="BioGRID-ORCS" id="1760">
    <property type="hits" value="17 hits in 1192 CRISPR screens"/>
</dbReference>
<dbReference type="ChiTaRS" id="DMPK">
    <property type="organism name" value="human"/>
</dbReference>
<dbReference type="EvolutionaryTrace" id="Q09013"/>
<dbReference type="GeneWiki" id="Myotonin-protein_kinase"/>
<dbReference type="GenomeRNAi" id="1760"/>
<dbReference type="Pharos" id="Q09013">
    <property type="development level" value="Tchem"/>
</dbReference>
<dbReference type="PRO" id="PR:Q09013"/>
<dbReference type="Proteomes" id="UP000005640">
    <property type="component" value="Chromosome 19"/>
</dbReference>
<dbReference type="RNAct" id="Q09013">
    <property type="molecule type" value="protein"/>
</dbReference>
<dbReference type="Bgee" id="ENSG00000104936">
    <property type="expression patterns" value="Expressed in apex of heart and 168 other cell types or tissues"/>
</dbReference>
<dbReference type="ExpressionAtlas" id="Q09013">
    <property type="expression patterns" value="baseline and differential"/>
</dbReference>
<dbReference type="GO" id="GO:0005829">
    <property type="term" value="C:cytosol"/>
    <property type="evidence" value="ECO:0000250"/>
    <property type="project" value="UniProtKB"/>
</dbReference>
<dbReference type="GO" id="GO:0005789">
    <property type="term" value="C:endoplasmic reticulum membrane"/>
    <property type="evidence" value="ECO:0000250"/>
    <property type="project" value="UniProtKB"/>
</dbReference>
<dbReference type="GO" id="GO:0005741">
    <property type="term" value="C:mitochondrial outer membrane"/>
    <property type="evidence" value="ECO:0000314"/>
    <property type="project" value="UniProtKB"/>
</dbReference>
<dbReference type="GO" id="GO:0031965">
    <property type="term" value="C:nuclear membrane"/>
    <property type="evidence" value="ECO:0000250"/>
    <property type="project" value="UniProtKB"/>
</dbReference>
<dbReference type="GO" id="GO:0005640">
    <property type="term" value="C:nuclear outer membrane"/>
    <property type="evidence" value="ECO:0007669"/>
    <property type="project" value="UniProtKB-SubCell"/>
</dbReference>
<dbReference type="GO" id="GO:0005886">
    <property type="term" value="C:plasma membrane"/>
    <property type="evidence" value="ECO:0000250"/>
    <property type="project" value="UniProtKB"/>
</dbReference>
<dbReference type="GO" id="GO:0033017">
    <property type="term" value="C:sarcoplasmic reticulum membrane"/>
    <property type="evidence" value="ECO:0000250"/>
    <property type="project" value="UniProtKB"/>
</dbReference>
<dbReference type="GO" id="GO:0005524">
    <property type="term" value="F:ATP binding"/>
    <property type="evidence" value="ECO:0000314"/>
    <property type="project" value="UniProtKB"/>
</dbReference>
<dbReference type="GO" id="GO:0046872">
    <property type="term" value="F:metal ion binding"/>
    <property type="evidence" value="ECO:0007669"/>
    <property type="project" value="UniProtKB-KW"/>
</dbReference>
<dbReference type="GO" id="GO:0017020">
    <property type="term" value="F:myosin phosphatase regulator activity"/>
    <property type="evidence" value="ECO:0000314"/>
    <property type="project" value="UniProtKB"/>
</dbReference>
<dbReference type="GO" id="GO:0106310">
    <property type="term" value="F:protein serine kinase activity"/>
    <property type="evidence" value="ECO:0007669"/>
    <property type="project" value="RHEA"/>
</dbReference>
<dbReference type="GO" id="GO:0004674">
    <property type="term" value="F:protein serine/threonine kinase activity"/>
    <property type="evidence" value="ECO:0000314"/>
    <property type="project" value="UniProtKB"/>
</dbReference>
<dbReference type="GO" id="GO:0006874">
    <property type="term" value="P:intracellular calcium ion homeostasis"/>
    <property type="evidence" value="ECO:0000250"/>
    <property type="project" value="UniProtKB"/>
</dbReference>
<dbReference type="GO" id="GO:0010657">
    <property type="term" value="P:muscle cell apoptotic process"/>
    <property type="evidence" value="ECO:0000314"/>
    <property type="project" value="UniProtKB"/>
</dbReference>
<dbReference type="GO" id="GO:0006998">
    <property type="term" value="P:nuclear envelope organization"/>
    <property type="evidence" value="ECO:0000315"/>
    <property type="project" value="UniProtKB"/>
</dbReference>
<dbReference type="GO" id="GO:0006468">
    <property type="term" value="P:protein phosphorylation"/>
    <property type="evidence" value="ECO:0000314"/>
    <property type="project" value="UniProtKB"/>
</dbReference>
<dbReference type="GO" id="GO:0014853">
    <property type="term" value="P:regulation of excitatory postsynaptic membrane potential involved in skeletal muscle contraction"/>
    <property type="evidence" value="ECO:0007669"/>
    <property type="project" value="Ensembl"/>
</dbReference>
<dbReference type="GO" id="GO:0008016">
    <property type="term" value="P:regulation of heart contraction"/>
    <property type="evidence" value="ECO:0000314"/>
    <property type="project" value="UniProtKB"/>
</dbReference>
<dbReference type="GO" id="GO:0010830">
    <property type="term" value="P:regulation of myotube differentiation"/>
    <property type="evidence" value="ECO:0000250"/>
    <property type="project" value="UniProtKB"/>
</dbReference>
<dbReference type="GO" id="GO:0014722">
    <property type="term" value="P:regulation of skeletal muscle contraction by calcium ion signaling"/>
    <property type="evidence" value="ECO:0000318"/>
    <property type="project" value="GO_Central"/>
</dbReference>
<dbReference type="GO" id="GO:0002028">
    <property type="term" value="P:regulation of sodium ion transport"/>
    <property type="evidence" value="ECO:0007669"/>
    <property type="project" value="Ensembl"/>
</dbReference>
<dbReference type="GO" id="GO:0051823">
    <property type="term" value="P:regulation of synapse structural plasticity"/>
    <property type="evidence" value="ECO:0007669"/>
    <property type="project" value="Ensembl"/>
</dbReference>
<dbReference type="CDD" id="cd05597">
    <property type="entry name" value="STKc_DMPK_like"/>
    <property type="match status" value="1"/>
</dbReference>
<dbReference type="FunFam" id="1.20.5.340:FF:000026">
    <property type="entry name" value="myotonin-protein kinase isoform X2"/>
    <property type="match status" value="1"/>
</dbReference>
<dbReference type="FunFam" id="1.10.510.10:FF:000014">
    <property type="entry name" value="Non-specific serine/threonine protein kinase"/>
    <property type="match status" value="1"/>
</dbReference>
<dbReference type="FunFam" id="3.30.200.20:FF:000017">
    <property type="entry name" value="Non-specific serine/threonine protein kinase"/>
    <property type="match status" value="1"/>
</dbReference>
<dbReference type="Gene3D" id="1.20.5.340">
    <property type="match status" value="1"/>
</dbReference>
<dbReference type="Gene3D" id="3.30.200.20">
    <property type="entry name" value="Phosphorylase Kinase, domain 1"/>
    <property type="match status" value="1"/>
</dbReference>
<dbReference type="Gene3D" id="1.10.510.10">
    <property type="entry name" value="Transferase(Phosphotransferase) domain 1"/>
    <property type="match status" value="1"/>
</dbReference>
<dbReference type="InterPro" id="IPR000961">
    <property type="entry name" value="AGC-kinase_C"/>
</dbReference>
<dbReference type="InterPro" id="IPR011009">
    <property type="entry name" value="Kinase-like_dom_sf"/>
</dbReference>
<dbReference type="InterPro" id="IPR014930">
    <property type="entry name" value="Myotonic_dystrophy_kinase_coil"/>
</dbReference>
<dbReference type="InterPro" id="IPR000719">
    <property type="entry name" value="Prot_kinase_dom"/>
</dbReference>
<dbReference type="InterPro" id="IPR017441">
    <property type="entry name" value="Protein_kinase_ATP_BS"/>
</dbReference>
<dbReference type="InterPro" id="IPR050839">
    <property type="entry name" value="Rho-assoc_Ser/Thr_Kinase"/>
</dbReference>
<dbReference type="InterPro" id="IPR008271">
    <property type="entry name" value="Ser/Thr_kinase_AS"/>
</dbReference>
<dbReference type="PANTHER" id="PTHR22988:SF79">
    <property type="entry name" value="LOW QUALITY PROTEIN: MYOTONIN-PROTEIN KINASE"/>
    <property type="match status" value="1"/>
</dbReference>
<dbReference type="PANTHER" id="PTHR22988">
    <property type="entry name" value="MYOTONIC DYSTROPHY S/T KINASE-RELATED"/>
    <property type="match status" value="1"/>
</dbReference>
<dbReference type="Pfam" id="PF08826">
    <property type="entry name" value="DMPK_coil"/>
    <property type="match status" value="1"/>
</dbReference>
<dbReference type="Pfam" id="PF00069">
    <property type="entry name" value="Pkinase"/>
    <property type="match status" value="1"/>
</dbReference>
<dbReference type="SMART" id="SM00133">
    <property type="entry name" value="S_TK_X"/>
    <property type="match status" value="1"/>
</dbReference>
<dbReference type="SMART" id="SM00220">
    <property type="entry name" value="S_TKc"/>
    <property type="match status" value="1"/>
</dbReference>
<dbReference type="SUPFAM" id="SSF56112">
    <property type="entry name" value="Protein kinase-like (PK-like)"/>
    <property type="match status" value="1"/>
</dbReference>
<dbReference type="PROSITE" id="PS51285">
    <property type="entry name" value="AGC_KINASE_CTER"/>
    <property type="match status" value="1"/>
</dbReference>
<dbReference type="PROSITE" id="PS00107">
    <property type="entry name" value="PROTEIN_KINASE_ATP"/>
    <property type="match status" value="1"/>
</dbReference>
<dbReference type="PROSITE" id="PS50011">
    <property type="entry name" value="PROTEIN_KINASE_DOM"/>
    <property type="match status" value="1"/>
</dbReference>
<dbReference type="PROSITE" id="PS00108">
    <property type="entry name" value="PROTEIN_KINASE_ST"/>
    <property type="match status" value="1"/>
</dbReference>
<gene>
    <name type="primary">DMPK</name>
    <name type="synonym">DM1PK</name>
    <name type="synonym">MDPK</name>
</gene>
<evidence type="ECO:0000250" key="1"/>
<evidence type="ECO:0000255" key="2"/>
<evidence type="ECO:0000255" key="3">
    <source>
        <dbReference type="PROSITE-ProRule" id="PRU00159"/>
    </source>
</evidence>
<evidence type="ECO:0000255" key="4">
    <source>
        <dbReference type="PROSITE-ProRule" id="PRU00618"/>
    </source>
</evidence>
<evidence type="ECO:0000255" key="5">
    <source>
        <dbReference type="PROSITE-ProRule" id="PRU10027"/>
    </source>
</evidence>
<evidence type="ECO:0000269" key="6">
    <source>
    </source>
</evidence>
<evidence type="ECO:0000269" key="7">
    <source>
    </source>
</evidence>
<evidence type="ECO:0000269" key="8">
    <source>
    </source>
</evidence>
<evidence type="ECO:0000269" key="9">
    <source>
    </source>
</evidence>
<evidence type="ECO:0000269" key="10">
    <source>
    </source>
</evidence>
<evidence type="ECO:0000269" key="11">
    <source>
    </source>
</evidence>
<evidence type="ECO:0000269" key="12">
    <source>
    </source>
</evidence>
<evidence type="ECO:0000269" key="13">
    <source>
    </source>
</evidence>
<evidence type="ECO:0000269" key="14">
    <source>
    </source>
</evidence>
<evidence type="ECO:0000269" key="15">
    <source>
    </source>
</evidence>
<evidence type="ECO:0000269" key="16">
    <source>
    </source>
</evidence>
<evidence type="ECO:0000269" key="17">
    <source>
    </source>
</evidence>
<evidence type="ECO:0000269" key="18">
    <source>
    </source>
</evidence>
<evidence type="ECO:0000269" key="19">
    <source>
    </source>
</evidence>
<evidence type="ECO:0000269" key="20">
    <source>
    </source>
</evidence>
<evidence type="ECO:0000269" key="21">
    <source>
    </source>
</evidence>
<evidence type="ECO:0000269" key="22">
    <source>
    </source>
</evidence>
<evidence type="ECO:0000269" key="23">
    <source>
    </source>
</evidence>
<evidence type="ECO:0000269" key="24">
    <source>
    </source>
</evidence>
<evidence type="ECO:0000269" key="25">
    <source>
    </source>
</evidence>
<evidence type="ECO:0000269" key="26">
    <source>
    </source>
</evidence>
<evidence type="ECO:0000303" key="27">
    <source>
    </source>
</evidence>
<evidence type="ECO:0000303" key="28">
    <source>
    </source>
</evidence>
<evidence type="ECO:0000303" key="29">
    <source>
    </source>
</evidence>
<evidence type="ECO:0000303" key="30">
    <source>
    </source>
</evidence>
<evidence type="ECO:0000303" key="31">
    <source>
    </source>
</evidence>
<evidence type="ECO:0000305" key="32"/>
<evidence type="ECO:0007829" key="33">
    <source>
        <dbReference type="PDB" id="1WT6"/>
    </source>
</evidence>
<evidence type="ECO:0007829" key="34">
    <source>
        <dbReference type="PDB" id="2VD5"/>
    </source>
</evidence>
<accession>Q09013</accession>
<accession>E5KR08</accession>
<accession>Q16205</accession>
<accession>Q6P5Z6</accession>
<keyword id="KW-0002">3D-structure</keyword>
<keyword id="KW-0025">Alternative splicing</keyword>
<keyword id="KW-0067">ATP-binding</keyword>
<keyword id="KW-0898">Cataract</keyword>
<keyword id="KW-1003">Cell membrane</keyword>
<keyword id="KW-0175">Coiled coil</keyword>
<keyword id="KW-0963">Cytoplasm</keyword>
<keyword id="KW-0256">Endoplasmic reticulum</keyword>
<keyword id="KW-0418">Kinase</keyword>
<keyword id="KW-0460">Magnesium</keyword>
<keyword id="KW-0472">Membrane</keyword>
<keyword id="KW-0479">Metal-binding</keyword>
<keyword id="KW-0496">Mitochondrion</keyword>
<keyword id="KW-1000">Mitochondrion outer membrane</keyword>
<keyword id="KW-0547">Nucleotide-binding</keyword>
<keyword id="KW-0539">Nucleus</keyword>
<keyword id="KW-0597">Phosphoprotein</keyword>
<keyword id="KW-1267">Proteomics identification</keyword>
<keyword id="KW-1185">Reference proteome</keyword>
<keyword id="KW-0703">Sarcoplasmic reticulum</keyword>
<keyword id="KW-0723">Serine/threonine-protein kinase</keyword>
<keyword id="KW-0808">Transferase</keyword>
<keyword id="KW-0812">Transmembrane</keyword>
<keyword id="KW-1133">Transmembrane helix</keyword>
<sequence>MSAEVRLRRLQQLVLDPGFLGLEPLLDLLLGVHQELGASELAQDKYVADFLQWAEPIVVRLKEVRLQRDDFEILKVIGRGAFSEVAVVKMKQTGQVYAMKIMNKWDMLKRGEVSCFREERDVLVNGDRRWITQLHFAFQDENYLYLVMEYYVGGDLLTLLSKFGERIPAEMARFYLAEIVMAIDSVHRLGYVHRDIKPDNILLDRCGHIRLADFGSCLKLRADGTVRSLVAVGTPDYLSPEILQAVGGGPGTGSYGPECDWWALGVFAYEMFYGQTPFYADSTAETYGKIVHYKEHLSLPLVDEGVPEEARDFIQRLLCPPETRLGRGGAGDFRTHPFFFGLDWDGLRDSVPPFTPDFEGATDTCNFDLVEDGLTAMVSGGGETLSDIREGAPLGVHLPFVGYSYSCMALRDSEVPGPTPMELEAEQLLEPHVQAPSLEPSVSPQDETAEVAVPAAVPAAEAEAEVTLRELQEALEEEVLTRQSLSREMEAIRTDNQNFASQLREAEARNRDLEAHVRQLQERMELLQAEGATAVTGVPSPRATDPPSHLDGPPAVAVGQCPLVGPGPMHRRHLLLPARVPRPGLSEALSLLLFAVVLSRAAALGCIGLVAHAGQLTAVWRRPGAARAP</sequence>